<protein>
    <recommendedName>
        <fullName>Forkhead box protein P1</fullName>
    </recommendedName>
</protein>
<accession>Q498D1</accession>
<keyword id="KW-0238">DNA-binding</keyword>
<keyword id="KW-1017">Isopeptide bond</keyword>
<keyword id="KW-0479">Metal-binding</keyword>
<keyword id="KW-0539">Nucleus</keyword>
<keyword id="KW-0597">Phosphoprotein</keyword>
<keyword id="KW-1185">Reference proteome</keyword>
<keyword id="KW-0678">Repressor</keyword>
<keyword id="KW-0804">Transcription</keyword>
<keyword id="KW-0805">Transcription regulation</keyword>
<keyword id="KW-0832">Ubl conjugation</keyword>
<keyword id="KW-0862">Zinc</keyword>
<keyword id="KW-0863">Zinc-finger</keyword>
<sequence>MMQESGSEAKSNGSTIQNGSSGGNHLLECGTLRDTRSNGEAPAVDLGAADLAHVQQQQQQALQVARQLLLQQQQQQQQQQQQQQQQQQQQQQQQQQQQQQQQQQQQQQQVSGLKSPKRNDKQPALQVPVSVAMMTPQVITPQQMQQILQQQVLSPQQLQVLLQQQQALMLQQQQLQEFYKKQQEQLQLQLLQQQHAGKQPKEQQQQQVATQQLAFQQQLLQMQQLQQQHLLSLQRQGLLTIQPGQPALPLQPLAQGMIPTELQQLWKEVTSAHTAEETTGSNHSSLDLTSTCVSSSAPSKTSLIMNPHASTNGQLSVHTPKRESLSHEEHPHSHPLYGHGVCKWPGCEAVCDDFPAFLKHLNSEHALDDRSTAQCRVQMQVVQQLELQLAKDKERLQAMMTHLHVKSTEPKAAPQPLNLVSSVTLSKSASEASPQSLPHTPTTPTAPLTPVTQGPSVITTTSMHTVGPIRRRYSDKYNVPISSADIAQNQEFYKNAEVRPPFTYASLIRQAILESPEKQLTLNEIYNWFTRMFAYFRRNAATWKNAVRHNLSLHKCFVRVENVKGAVWTVDEVEFQKRRPQKISGNPSLIKNMQSGHAYCTPLNAALQASMAENSIPLYTTASMGNPTLGSLASAIREELNGAMEHTNSNESDSSPGRSPMQAVHPIHVKEEPLDPEEAEGPLSLVTTANHSPDFDHDRDYEDEPVNEDME</sequence>
<organism>
    <name type="scientific">Rattus norvegicus</name>
    <name type="common">Rat</name>
    <dbReference type="NCBI Taxonomy" id="10116"/>
    <lineage>
        <taxon>Eukaryota</taxon>
        <taxon>Metazoa</taxon>
        <taxon>Chordata</taxon>
        <taxon>Craniata</taxon>
        <taxon>Vertebrata</taxon>
        <taxon>Euteleostomi</taxon>
        <taxon>Mammalia</taxon>
        <taxon>Eutheria</taxon>
        <taxon>Euarchontoglires</taxon>
        <taxon>Glires</taxon>
        <taxon>Rodentia</taxon>
        <taxon>Myomorpha</taxon>
        <taxon>Muroidea</taxon>
        <taxon>Muridae</taxon>
        <taxon>Murinae</taxon>
        <taxon>Rattus</taxon>
    </lineage>
</organism>
<evidence type="ECO:0000250" key="1"/>
<evidence type="ECO:0000250" key="2">
    <source>
        <dbReference type="UniProtKB" id="P58462"/>
    </source>
</evidence>
<evidence type="ECO:0000250" key="3">
    <source>
        <dbReference type="UniProtKB" id="Q9H334"/>
    </source>
</evidence>
<evidence type="ECO:0000255" key="4">
    <source>
        <dbReference type="PROSITE-ProRule" id="PRU00089"/>
    </source>
</evidence>
<evidence type="ECO:0000256" key="5">
    <source>
        <dbReference type="SAM" id="MobiDB-lite"/>
    </source>
</evidence>
<comment type="function">
    <text evidence="2 3">Transcriptional repressor. Can act with CTBP1 to synergistically repress transcription but CTPBP1 is not essential. Plays an important role in the specification and differentiation of lung epithelium. Acts cooperatively with FOXP4 to regulate lung secretory epithelial cell fate and regeneration by restricting the goblet cell lineage program; the function may involve regulation of AGR2. Essential transcriptional regulator of B-cell development. Involved in regulation of cardiac muscle cell proliferation. Involved in the columnar organization of spinal motor neurons. Promotes the formation of the lateral motor neuron column (LMC) and the preganglionic motor column (PGC) and is required for respective appropriate motor axon projections. The segment-appropriate generation of spinal cord motor columns requires cooperation with other Hox proteins. Can regulate PITX3 promoter activity; may promote midbrain identity in embryonic stem cell-derived dopamine neurons by regulating PITX3. Negatively regulates the differentiation of T follicular helper cells T(FH)s. Involved in maintenance of hair follicle stem cell quiescence; the function probably involves regulation of FGF18. Represses transcription of various pro-apoptotic genes and cooperates with NF-kappa B-signaling in promoting B-cell expansion by inhibition of caspase-dependent apoptosis. Binds to CSF1R promoter elements and is involved in regulation of monocyte differentiation and macrophage functions; repression of CSF1R in monocytes seems to involve NCOR2 as corepressor. Involved in endothelial cell proliferation, tube formation and migration indicative for a role in angiogenesis; the role in neovascularization seems to implicate suppression of SEMA5B. Can negatively regulate androgen receptor signaling (By similarity). Acts as a transcriptional activator of the FBXL7 promoter; this activity is regulated by AURKA (By similarity).</text>
</comment>
<comment type="subunit">
    <text evidence="2 3">Forms homodimers and heterodimers with FOXP2 and FOXP4. Dimerization is required for DNA-binding. Self-associates. Interacts with CTBP1. Interacts with NCOR2 and AR. Interacts with FOXP2 (By similarity). Interacts with TBR1 (By similarity). Interacts with AURKA; this interaction facilitates the phosphorylation of FOXP1, which suppresses the expression of FBXL7 (By similarity). Interacts with ZMYM2 (By similarity).</text>
</comment>
<comment type="subcellular location">
    <subcellularLocation>
        <location evidence="3">Nucleus</location>
    </subcellularLocation>
    <text evidence="3">Not found in the nucleolus.</text>
</comment>
<comment type="domain">
    <text evidence="2">The leucine-zipper is required for dimerization and transcriptional repression.</text>
</comment>
<gene>
    <name type="primary">Foxp1</name>
</gene>
<feature type="chain" id="PRO_0000294519" description="Forkhead box protein P1">
    <location>
        <begin position="1"/>
        <end position="711"/>
    </location>
</feature>
<feature type="zinc finger region" description="C2H2-type">
    <location>
        <begin position="340"/>
        <end position="365"/>
    </location>
</feature>
<feature type="DNA-binding region" description="Fork-head" evidence="4">
    <location>
        <begin position="499"/>
        <end position="589"/>
    </location>
</feature>
<feature type="region of interest" description="Disordered" evidence="5">
    <location>
        <begin position="1"/>
        <end position="41"/>
    </location>
</feature>
<feature type="region of interest" description="Disordered" evidence="5">
    <location>
        <begin position="273"/>
        <end position="292"/>
    </location>
</feature>
<feature type="region of interest" description="Disordered" evidence="5">
    <location>
        <begin position="305"/>
        <end position="332"/>
    </location>
</feature>
<feature type="region of interest" description="Leucine-zipper">
    <location>
        <begin position="382"/>
        <end position="403"/>
    </location>
</feature>
<feature type="region of interest" description="CTBP1-binding" evidence="1">
    <location>
        <begin position="416"/>
        <end position="420"/>
    </location>
</feature>
<feature type="region of interest" description="Disordered" evidence="5">
    <location>
        <begin position="424"/>
        <end position="456"/>
    </location>
</feature>
<feature type="region of interest" description="Disordered" evidence="5">
    <location>
        <begin position="645"/>
        <end position="711"/>
    </location>
</feature>
<feature type="compositionally biased region" description="Polar residues" evidence="5">
    <location>
        <begin position="1"/>
        <end position="19"/>
    </location>
</feature>
<feature type="compositionally biased region" description="Polar residues" evidence="5">
    <location>
        <begin position="305"/>
        <end position="317"/>
    </location>
</feature>
<feature type="compositionally biased region" description="Basic and acidic residues" evidence="5">
    <location>
        <begin position="320"/>
        <end position="332"/>
    </location>
</feature>
<feature type="compositionally biased region" description="Polar residues" evidence="5">
    <location>
        <begin position="424"/>
        <end position="437"/>
    </location>
</feature>
<feature type="compositionally biased region" description="Low complexity" evidence="5">
    <location>
        <begin position="438"/>
        <end position="452"/>
    </location>
</feature>
<feature type="compositionally biased region" description="Polar residues" evidence="5">
    <location>
        <begin position="646"/>
        <end position="657"/>
    </location>
</feature>
<feature type="compositionally biased region" description="Acidic residues" evidence="5">
    <location>
        <begin position="701"/>
        <end position="711"/>
    </location>
</feature>
<feature type="modified residue" description="Phosphoserine" evidence="3">
    <location>
        <position position="115"/>
    </location>
</feature>
<feature type="modified residue" description="Phosphothreonine" evidence="3">
    <location>
        <position position="687"/>
    </location>
</feature>
<feature type="modified residue" description="Phosphoserine" evidence="3">
    <location>
        <position position="692"/>
    </location>
</feature>
<feature type="cross-link" description="Glycyl lysine isopeptide (Lys-Gly) (interchain with G-Cter in SUMO2)" evidence="3">
    <location>
        <position position="321"/>
    </location>
</feature>
<feature type="cross-link" description="Glycyl lysine isopeptide (Lys-Gly) (interchain with G-Cter in SUMO2)" evidence="3">
    <location>
        <position position="406"/>
    </location>
</feature>
<feature type="cross-link" description="Glycyl lysine isopeptide (Lys-Gly) (interchain with G-Cter in SUMO2)" evidence="3">
    <location>
        <position position="411"/>
    </location>
</feature>
<feature type="cross-link" description="Glycyl lysine isopeptide (Lys-Gly) (interchain with G-Cter in SUMO2)" evidence="3">
    <location>
        <position position="476"/>
    </location>
</feature>
<name>FOXP1_RAT</name>
<proteinExistence type="evidence at protein level"/>
<reference key="1">
    <citation type="journal article" date="2004" name="Genome Res.">
        <title>The status, quality, and expansion of the NIH full-length cDNA project: the Mammalian Gene Collection (MGC).</title>
        <authorList>
            <consortium name="The MGC Project Team"/>
        </authorList>
    </citation>
    <scope>NUCLEOTIDE SEQUENCE [LARGE SCALE MRNA]</scope>
    <source>
        <tissue>Thymus</tissue>
    </source>
</reference>
<reference key="2">
    <citation type="journal article" date="2012" name="Nat. Commun.">
        <title>Quantitative maps of protein phosphorylation sites across 14 different rat organs and tissues.</title>
        <authorList>
            <person name="Lundby A."/>
            <person name="Secher A."/>
            <person name="Lage K."/>
            <person name="Nordsborg N.B."/>
            <person name="Dmytriyev A."/>
            <person name="Lundby C."/>
            <person name="Olsen J.V."/>
        </authorList>
    </citation>
    <scope>IDENTIFICATION BY MASS SPECTROMETRY [LARGE SCALE ANALYSIS]</scope>
</reference>
<dbReference type="EMBL" id="BC100267">
    <property type="protein sequence ID" value="AAI00268.1"/>
    <property type="molecule type" value="mRNA"/>
</dbReference>
<dbReference type="RefSeq" id="NP_001029303.1">
    <property type="nucleotide sequence ID" value="NM_001034131.2"/>
</dbReference>
<dbReference type="RefSeq" id="XP_008761370.1">
    <property type="nucleotide sequence ID" value="XM_008763148.1"/>
</dbReference>
<dbReference type="RefSeq" id="XP_008761371.1">
    <property type="nucleotide sequence ID" value="XM_008763149.2"/>
</dbReference>
<dbReference type="RefSeq" id="XP_008761372.1">
    <property type="nucleotide sequence ID" value="XM_008763150.2"/>
</dbReference>
<dbReference type="RefSeq" id="XP_008761374.1">
    <property type="nucleotide sequence ID" value="XM_008763152.2"/>
</dbReference>
<dbReference type="RefSeq" id="XP_008761375.1">
    <property type="nucleotide sequence ID" value="XM_008763153.2"/>
</dbReference>
<dbReference type="RefSeq" id="XP_063141898.1">
    <property type="nucleotide sequence ID" value="XM_063285828.1"/>
</dbReference>
<dbReference type="RefSeq" id="XP_063141899.1">
    <property type="nucleotide sequence ID" value="XM_063285829.1"/>
</dbReference>
<dbReference type="RefSeq" id="XP_063141900.1">
    <property type="nucleotide sequence ID" value="XM_063285830.1"/>
</dbReference>
<dbReference type="SMR" id="Q498D1"/>
<dbReference type="FunCoup" id="Q498D1">
    <property type="interactions" value="1112"/>
</dbReference>
<dbReference type="STRING" id="10116.ENSRNOP00000013271"/>
<dbReference type="iPTMnet" id="Q498D1"/>
<dbReference type="PhosphoSitePlus" id="Q498D1"/>
<dbReference type="PaxDb" id="10116-ENSRNOP00000013271"/>
<dbReference type="Ensembl" id="ENSRNOT00000013271.7">
    <property type="protein sequence ID" value="ENSRNOP00000013271.5"/>
    <property type="gene ID" value="ENSRNOG00000009184.8"/>
</dbReference>
<dbReference type="GeneID" id="297480"/>
<dbReference type="KEGG" id="rno:297480"/>
<dbReference type="UCSC" id="RGD:1308669">
    <property type="organism name" value="rat"/>
</dbReference>
<dbReference type="AGR" id="RGD:1308669"/>
<dbReference type="CTD" id="27086"/>
<dbReference type="RGD" id="1308669">
    <property type="gene designation" value="Foxp1"/>
</dbReference>
<dbReference type="eggNOG" id="KOG4385">
    <property type="taxonomic scope" value="Eukaryota"/>
</dbReference>
<dbReference type="GeneTree" id="ENSGT00940000159892"/>
<dbReference type="HOGENOM" id="CLU_019502_3_1_1"/>
<dbReference type="InParanoid" id="Q498D1"/>
<dbReference type="OMA" id="HEEHSHN"/>
<dbReference type="PhylomeDB" id="Q498D1"/>
<dbReference type="TreeFam" id="TF326978"/>
<dbReference type="PRO" id="PR:Q498D1"/>
<dbReference type="Proteomes" id="UP000002494">
    <property type="component" value="Chromosome 4"/>
</dbReference>
<dbReference type="Bgee" id="ENSRNOG00000009184">
    <property type="expression patterns" value="Expressed in spleen and 19 other cell types or tissues"/>
</dbReference>
<dbReference type="GO" id="GO:0005634">
    <property type="term" value="C:nucleus"/>
    <property type="evidence" value="ECO:0000250"/>
    <property type="project" value="UniProtKB"/>
</dbReference>
<dbReference type="GO" id="GO:0003682">
    <property type="term" value="F:chromatin binding"/>
    <property type="evidence" value="ECO:0000266"/>
    <property type="project" value="RGD"/>
</dbReference>
<dbReference type="GO" id="GO:0001046">
    <property type="term" value="F:core promoter sequence-specific DNA binding"/>
    <property type="evidence" value="ECO:0000266"/>
    <property type="project" value="RGD"/>
</dbReference>
<dbReference type="GO" id="GO:0003677">
    <property type="term" value="F:DNA binding"/>
    <property type="evidence" value="ECO:0000266"/>
    <property type="project" value="RGD"/>
</dbReference>
<dbReference type="GO" id="GO:0003700">
    <property type="term" value="F:DNA-binding transcription factor activity"/>
    <property type="evidence" value="ECO:0000266"/>
    <property type="project" value="RGD"/>
</dbReference>
<dbReference type="GO" id="GO:0000981">
    <property type="term" value="F:DNA-binding transcription factor activity, RNA polymerase II-specific"/>
    <property type="evidence" value="ECO:0000266"/>
    <property type="project" value="RGD"/>
</dbReference>
<dbReference type="GO" id="GO:0001227">
    <property type="term" value="F:DNA-binding transcription repressor activity, RNA polymerase II-specific"/>
    <property type="evidence" value="ECO:0000266"/>
    <property type="project" value="RGD"/>
</dbReference>
<dbReference type="GO" id="GO:0042802">
    <property type="term" value="F:identical protein binding"/>
    <property type="evidence" value="ECO:0000266"/>
    <property type="project" value="RGD"/>
</dbReference>
<dbReference type="GO" id="GO:0050681">
    <property type="term" value="F:nuclear androgen receptor binding"/>
    <property type="evidence" value="ECO:0000266"/>
    <property type="project" value="RGD"/>
</dbReference>
<dbReference type="GO" id="GO:0000978">
    <property type="term" value="F:RNA polymerase II cis-regulatory region sequence-specific DNA binding"/>
    <property type="evidence" value="ECO:0000266"/>
    <property type="project" value="RGD"/>
</dbReference>
<dbReference type="GO" id="GO:1990837">
    <property type="term" value="F:sequence-specific double-stranded DNA binding"/>
    <property type="evidence" value="ECO:0000266"/>
    <property type="project" value="RGD"/>
</dbReference>
<dbReference type="GO" id="GO:0001221">
    <property type="term" value="F:transcription coregulator binding"/>
    <property type="evidence" value="ECO:0000266"/>
    <property type="project" value="RGD"/>
</dbReference>
<dbReference type="GO" id="GO:0008270">
    <property type="term" value="F:zinc ion binding"/>
    <property type="evidence" value="ECO:0007669"/>
    <property type="project" value="UniProtKB-KW"/>
</dbReference>
<dbReference type="GO" id="GO:0055007">
    <property type="term" value="P:cardiac muscle cell differentiation"/>
    <property type="evidence" value="ECO:0000266"/>
    <property type="project" value="RGD"/>
</dbReference>
<dbReference type="GO" id="GO:0071356">
    <property type="term" value="P:cellular response to tumor necrosis factor"/>
    <property type="evidence" value="ECO:0000270"/>
    <property type="project" value="RGD"/>
</dbReference>
<dbReference type="GO" id="GO:0006974">
    <property type="term" value="P:DNA damage response"/>
    <property type="evidence" value="ECO:0000266"/>
    <property type="project" value="RGD"/>
</dbReference>
<dbReference type="GO" id="GO:0042118">
    <property type="term" value="P:endothelial cell activation"/>
    <property type="evidence" value="ECO:0000266"/>
    <property type="project" value="RGD"/>
</dbReference>
<dbReference type="GO" id="GO:0030900">
    <property type="term" value="P:forebrain development"/>
    <property type="evidence" value="ECO:0000270"/>
    <property type="project" value="RGD"/>
</dbReference>
<dbReference type="GO" id="GO:0007507">
    <property type="term" value="P:heart development"/>
    <property type="evidence" value="ECO:0000266"/>
    <property type="project" value="RGD"/>
</dbReference>
<dbReference type="GO" id="GO:0033152">
    <property type="term" value="P:immunoglobulin V(D)J recombination"/>
    <property type="evidence" value="ECO:0000266"/>
    <property type="project" value="RGD"/>
</dbReference>
<dbReference type="GO" id="GO:0098582">
    <property type="term" value="P:innate vocalization behavior"/>
    <property type="evidence" value="ECO:0000266"/>
    <property type="project" value="RGD"/>
</dbReference>
<dbReference type="GO" id="GO:0030324">
    <property type="term" value="P:lung development"/>
    <property type="evidence" value="ECO:0000266"/>
    <property type="project" value="RGD"/>
</dbReference>
<dbReference type="GO" id="GO:0061140">
    <property type="term" value="P:lung secretory cell differentiation"/>
    <property type="evidence" value="ECO:0000266"/>
    <property type="project" value="RGD"/>
</dbReference>
<dbReference type="GO" id="GO:0042116">
    <property type="term" value="P:macrophage activation"/>
    <property type="evidence" value="ECO:0000266"/>
    <property type="project" value="RGD"/>
</dbReference>
<dbReference type="GO" id="GO:0042117">
    <property type="term" value="P:monocyte activation"/>
    <property type="evidence" value="ECO:0000266"/>
    <property type="project" value="RGD"/>
</dbReference>
<dbReference type="GO" id="GO:0008045">
    <property type="term" value="P:motor neuron axon guidance"/>
    <property type="evidence" value="ECO:0000266"/>
    <property type="project" value="RGD"/>
</dbReference>
<dbReference type="GO" id="GO:0060766">
    <property type="term" value="P:negative regulation of androgen receptor signaling pathway"/>
    <property type="evidence" value="ECO:0000266"/>
    <property type="project" value="RGD"/>
</dbReference>
<dbReference type="GO" id="GO:0002903">
    <property type="term" value="P:negative regulation of B cell apoptotic process"/>
    <property type="evidence" value="ECO:0000266"/>
    <property type="project" value="RGD"/>
</dbReference>
<dbReference type="GO" id="GO:0061052">
    <property type="term" value="P:negative regulation of cell growth involved in cardiac muscle cell development"/>
    <property type="evidence" value="ECO:0000315"/>
    <property type="project" value="RGD"/>
</dbReference>
<dbReference type="GO" id="GO:0045892">
    <property type="term" value="P:negative regulation of DNA-templated transcription"/>
    <property type="evidence" value="ECO:0000250"/>
    <property type="project" value="UniProtKB"/>
</dbReference>
<dbReference type="GO" id="GO:0010629">
    <property type="term" value="P:negative regulation of gene expression"/>
    <property type="evidence" value="ECO:0000266"/>
    <property type="project" value="RGD"/>
</dbReference>
<dbReference type="GO" id="GO:1901250">
    <property type="term" value="P:negative regulation of lung goblet cell differentiation"/>
    <property type="evidence" value="ECO:0000266"/>
    <property type="project" value="RGD"/>
</dbReference>
<dbReference type="GO" id="GO:0000122">
    <property type="term" value="P:negative regulation of transcription by RNA polymerase II"/>
    <property type="evidence" value="ECO:0000266"/>
    <property type="project" value="RGD"/>
</dbReference>
<dbReference type="GO" id="GO:0036035">
    <property type="term" value="P:osteoclast development"/>
    <property type="evidence" value="ECO:0000266"/>
    <property type="project" value="RGD"/>
</dbReference>
<dbReference type="GO" id="GO:0030316">
    <property type="term" value="P:osteoclast differentiation"/>
    <property type="evidence" value="ECO:0000266"/>
    <property type="project" value="RGD"/>
</dbReference>
<dbReference type="GO" id="GO:0050861">
    <property type="term" value="P:positive regulation of B cell receptor signaling pathway"/>
    <property type="evidence" value="ECO:0000266"/>
    <property type="project" value="RGD"/>
</dbReference>
<dbReference type="GO" id="GO:0045893">
    <property type="term" value="P:positive regulation of DNA-templated transcription"/>
    <property type="evidence" value="ECO:0000266"/>
    <property type="project" value="RGD"/>
</dbReference>
<dbReference type="GO" id="GO:0010595">
    <property type="term" value="P:positive regulation of endothelial cell migration"/>
    <property type="evidence" value="ECO:0000266"/>
    <property type="project" value="RGD"/>
</dbReference>
<dbReference type="GO" id="GO:0050679">
    <property type="term" value="P:positive regulation of epithelial cell proliferation"/>
    <property type="evidence" value="ECO:0000266"/>
    <property type="project" value="RGD"/>
</dbReference>
<dbReference type="GO" id="GO:1901300">
    <property type="term" value="P:positive regulation of hydrogen peroxide-mediated programmed cell death"/>
    <property type="evidence" value="ECO:0000315"/>
    <property type="project" value="RGD"/>
</dbReference>
<dbReference type="GO" id="GO:0002639">
    <property type="term" value="P:positive regulation of immunoglobulin production"/>
    <property type="evidence" value="ECO:0000266"/>
    <property type="project" value="RGD"/>
</dbReference>
<dbReference type="GO" id="GO:0032745">
    <property type="term" value="P:positive regulation of interleukin-21 production"/>
    <property type="evidence" value="ECO:0000266"/>
    <property type="project" value="RGD"/>
</dbReference>
<dbReference type="GO" id="GO:0002053">
    <property type="term" value="P:positive regulation of mesenchymal cell proliferation"/>
    <property type="evidence" value="ECO:0000266"/>
    <property type="project" value="RGD"/>
</dbReference>
<dbReference type="GO" id="GO:0048661">
    <property type="term" value="P:positive regulation of smooth muscle cell proliferation"/>
    <property type="evidence" value="ECO:0000266"/>
    <property type="project" value="RGD"/>
</dbReference>
<dbReference type="GO" id="GO:1904263">
    <property type="term" value="P:positive regulation of TORC1 signaling"/>
    <property type="evidence" value="ECO:0000266"/>
    <property type="project" value="RGD"/>
</dbReference>
<dbReference type="GO" id="GO:0045944">
    <property type="term" value="P:positive regulation of transcription by RNA polymerase II"/>
    <property type="evidence" value="ECO:0000266"/>
    <property type="project" value="RGD"/>
</dbReference>
<dbReference type="GO" id="GO:0002329">
    <property type="term" value="P:pre-B cell differentiation"/>
    <property type="evidence" value="ECO:0000266"/>
    <property type="project" value="RGD"/>
</dbReference>
<dbReference type="GO" id="GO:0098900">
    <property type="term" value="P:regulation of action potential"/>
    <property type="evidence" value="ECO:0000266"/>
    <property type="project" value="RGD"/>
</dbReference>
<dbReference type="GO" id="GO:0060765">
    <property type="term" value="P:regulation of androgen receptor signaling pathway"/>
    <property type="evidence" value="ECO:0000266"/>
    <property type="project" value="RGD"/>
</dbReference>
<dbReference type="GO" id="GO:0060043">
    <property type="term" value="P:regulation of cardiac muscle cell proliferation"/>
    <property type="evidence" value="ECO:0000266"/>
    <property type="project" value="RGD"/>
</dbReference>
<dbReference type="GO" id="GO:2000341">
    <property type="term" value="P:regulation of chemokine (C-X-C motif) ligand 2 production"/>
    <property type="evidence" value="ECO:0000266"/>
    <property type="project" value="RGD"/>
</dbReference>
<dbReference type="GO" id="GO:1900424">
    <property type="term" value="P:regulation of defense response to bacterium"/>
    <property type="evidence" value="ECO:0000266"/>
    <property type="project" value="RGD"/>
</dbReference>
<dbReference type="GO" id="GO:1901509">
    <property type="term" value="P:regulation of endothelial tube morphogenesis"/>
    <property type="evidence" value="ECO:0000266"/>
    <property type="project" value="RGD"/>
</dbReference>
<dbReference type="GO" id="GO:0010468">
    <property type="term" value="P:regulation of gene expression"/>
    <property type="evidence" value="ECO:0000266"/>
    <property type="project" value="RGD"/>
</dbReference>
<dbReference type="GO" id="GO:0050727">
    <property type="term" value="P:regulation of inflammatory response"/>
    <property type="evidence" value="ECO:0000266"/>
    <property type="project" value="RGD"/>
</dbReference>
<dbReference type="GO" id="GO:0032651">
    <property type="term" value="P:regulation of interleukin-1 beta production"/>
    <property type="evidence" value="ECO:0000266"/>
    <property type="project" value="RGD"/>
</dbReference>
<dbReference type="GO" id="GO:0032655">
    <property type="term" value="P:regulation of interleukin-12 production"/>
    <property type="evidence" value="ECO:0000266"/>
    <property type="project" value="RGD"/>
</dbReference>
<dbReference type="GO" id="GO:1901249">
    <property type="term" value="P:regulation of lung goblet cell differentiation"/>
    <property type="evidence" value="ECO:0000266"/>
    <property type="project" value="RGD"/>
</dbReference>
<dbReference type="GO" id="GO:1901256">
    <property type="term" value="P:regulation of macrophage colony-stimulating factor production"/>
    <property type="evidence" value="ECO:0000266"/>
    <property type="project" value="RGD"/>
</dbReference>
<dbReference type="GO" id="GO:0045655">
    <property type="term" value="P:regulation of monocyte differentiation"/>
    <property type="evidence" value="ECO:0000266"/>
    <property type="project" value="RGD"/>
</dbReference>
<dbReference type="GO" id="GO:0006357">
    <property type="term" value="P:regulation of transcription by RNA polymerase II"/>
    <property type="evidence" value="ECO:0000318"/>
    <property type="project" value="GO_Central"/>
</dbReference>
<dbReference type="GO" id="GO:0032680">
    <property type="term" value="P:regulation of tumor necrosis factor production"/>
    <property type="evidence" value="ECO:0000266"/>
    <property type="project" value="RGD"/>
</dbReference>
<dbReference type="GO" id="GO:0032496">
    <property type="term" value="P:response to lipopolysaccharide"/>
    <property type="evidence" value="ECO:0000266"/>
    <property type="project" value="RGD"/>
</dbReference>
<dbReference type="GO" id="GO:0033574">
    <property type="term" value="P:response to testosterone"/>
    <property type="evidence" value="ECO:0000270"/>
    <property type="project" value="RGD"/>
</dbReference>
<dbReference type="GO" id="GO:0007519">
    <property type="term" value="P:skeletal muscle tissue development"/>
    <property type="evidence" value="ECO:0000266"/>
    <property type="project" value="RGD"/>
</dbReference>
<dbReference type="GO" id="GO:0048745">
    <property type="term" value="P:smooth muscle tissue development"/>
    <property type="evidence" value="ECO:0000266"/>
    <property type="project" value="RGD"/>
</dbReference>
<dbReference type="GO" id="GO:0021756">
    <property type="term" value="P:striatum development"/>
    <property type="evidence" value="ECO:0000270"/>
    <property type="project" value="RGD"/>
</dbReference>
<dbReference type="GO" id="GO:0061470">
    <property type="term" value="P:T follicular helper cell differentiation"/>
    <property type="evidence" value="ECO:0000266"/>
    <property type="project" value="RGD"/>
</dbReference>
<dbReference type="GO" id="GO:0006366">
    <property type="term" value="P:transcription by RNA polymerase II"/>
    <property type="evidence" value="ECO:0000266"/>
    <property type="project" value="RGD"/>
</dbReference>
<dbReference type="GO" id="GO:0021517">
    <property type="term" value="P:ventral spinal cord development"/>
    <property type="evidence" value="ECO:0000266"/>
    <property type="project" value="RGD"/>
</dbReference>
<dbReference type="CDD" id="cd20065">
    <property type="entry name" value="FH_FOXP2"/>
    <property type="match status" value="1"/>
</dbReference>
<dbReference type="FunFam" id="1.20.5.340:FF:000005">
    <property type="entry name" value="Forkhead box P1, isoform CRA_f"/>
    <property type="match status" value="1"/>
</dbReference>
<dbReference type="FunFam" id="1.10.10.10:FF:000010">
    <property type="entry name" value="Forkhead box P2 isoform B"/>
    <property type="match status" value="1"/>
</dbReference>
<dbReference type="Gene3D" id="1.20.5.340">
    <property type="match status" value="1"/>
</dbReference>
<dbReference type="Gene3D" id="1.10.10.10">
    <property type="entry name" value="Winged helix-like DNA-binding domain superfamily/Winged helix DNA-binding domain"/>
    <property type="match status" value="1"/>
</dbReference>
<dbReference type="InterPro" id="IPR047412">
    <property type="entry name" value="FH_FOXP1_P2"/>
</dbReference>
<dbReference type="InterPro" id="IPR001766">
    <property type="entry name" value="Fork_head_dom"/>
</dbReference>
<dbReference type="InterPro" id="IPR050998">
    <property type="entry name" value="FOXP"/>
</dbReference>
<dbReference type="InterPro" id="IPR032354">
    <property type="entry name" value="FOXP-CC"/>
</dbReference>
<dbReference type="InterPro" id="IPR030456">
    <property type="entry name" value="TF_fork_head_CS_2"/>
</dbReference>
<dbReference type="InterPro" id="IPR036388">
    <property type="entry name" value="WH-like_DNA-bd_sf"/>
</dbReference>
<dbReference type="InterPro" id="IPR036390">
    <property type="entry name" value="WH_DNA-bd_sf"/>
</dbReference>
<dbReference type="PANTHER" id="PTHR45796">
    <property type="entry name" value="FORKHEAD BOX P, ISOFORM C"/>
    <property type="match status" value="1"/>
</dbReference>
<dbReference type="PANTHER" id="PTHR45796:SF3">
    <property type="entry name" value="FORKHEAD BOX PROTEIN P1"/>
    <property type="match status" value="1"/>
</dbReference>
<dbReference type="Pfam" id="PF00250">
    <property type="entry name" value="Forkhead"/>
    <property type="match status" value="1"/>
</dbReference>
<dbReference type="Pfam" id="PF16159">
    <property type="entry name" value="FOXP-CC"/>
    <property type="match status" value="1"/>
</dbReference>
<dbReference type="PRINTS" id="PR00053">
    <property type="entry name" value="FORKHEAD"/>
</dbReference>
<dbReference type="SMART" id="SM00339">
    <property type="entry name" value="FH"/>
    <property type="match status" value="1"/>
</dbReference>
<dbReference type="SUPFAM" id="SSF46785">
    <property type="entry name" value="Winged helix' DNA-binding domain"/>
    <property type="match status" value="1"/>
</dbReference>
<dbReference type="PROSITE" id="PS00658">
    <property type="entry name" value="FORK_HEAD_2"/>
    <property type="match status" value="1"/>
</dbReference>
<dbReference type="PROSITE" id="PS50039">
    <property type="entry name" value="FORK_HEAD_3"/>
    <property type="match status" value="1"/>
</dbReference>
<dbReference type="PROSITE" id="PS00028">
    <property type="entry name" value="ZINC_FINGER_C2H2_1"/>
    <property type="match status" value="1"/>
</dbReference>